<organism>
    <name type="scientific">Saccharomyces cerevisiae (strain ATCC 204508 / S288c)</name>
    <name type="common">Baker's yeast</name>
    <dbReference type="NCBI Taxonomy" id="559292"/>
    <lineage>
        <taxon>Eukaryota</taxon>
        <taxon>Fungi</taxon>
        <taxon>Dikarya</taxon>
        <taxon>Ascomycota</taxon>
        <taxon>Saccharomycotina</taxon>
        <taxon>Saccharomycetes</taxon>
        <taxon>Saccharomycetales</taxon>
        <taxon>Saccharomycetaceae</taxon>
        <taxon>Saccharomyces</taxon>
    </lineage>
</organism>
<accession>P0C1V3</accession>
<dbReference type="EMBL" id="L05146">
    <property type="status" value="NOT_ANNOTATED_CDS"/>
    <property type="molecule type" value="Genomic_DNA"/>
</dbReference>
<dbReference type="STRING" id="4932.YAL016C-B"/>
<dbReference type="PaxDb" id="4932-YAL016C-B"/>
<dbReference type="EnsemblFungi" id="YAL016C-B_mRNA">
    <property type="protein sequence ID" value="YAL016C-B"/>
    <property type="gene ID" value="YAL016C-B"/>
</dbReference>
<dbReference type="AGR" id="SGD:S000028528"/>
<dbReference type="SGD" id="S000028528">
    <property type="gene designation" value="YAL016C-B"/>
</dbReference>
<dbReference type="HOGENOM" id="CLU_2923983_0_0_1"/>
<feature type="chain" id="PRO_0000248425" description="Putative uncharacterized protein YAL016C-B">
    <location>
        <begin position="1"/>
        <end position="61"/>
    </location>
</feature>
<gene>
    <name type="ordered locus">YAL016C-B</name>
</gene>
<proteinExistence type="uncertain"/>
<comment type="caution">
    <text evidence="1">Product of a dubious gene prediction unlikely to encode a functional protein. Because of that it is not part of the S.cerevisiae S288c complete/reference proteome set.</text>
</comment>
<name>YA016_YEAST</name>
<sequence length="61" mass="7406">MLYFYHINILIKERKYILIYSYLNRENYQLITEESKKNDIPSIVSTGYFFAFSFPITNVLE</sequence>
<evidence type="ECO:0000305" key="1">
    <source>
    </source>
</evidence>
<protein>
    <recommendedName>
        <fullName>Putative uncharacterized protein YAL016C-B</fullName>
    </recommendedName>
</protein>
<reference key="1">
    <citation type="journal article" date="1995" name="Proc. Natl. Acad. Sci. U.S.A.">
        <title>The nucleotide sequence of chromosome I from Saccharomyces cerevisiae.</title>
        <authorList>
            <person name="Bussey H."/>
            <person name="Kaback D.B."/>
            <person name="Zhong W.-W."/>
            <person name="Vo D.H."/>
            <person name="Clark M.W."/>
            <person name="Fortin N."/>
            <person name="Hall J."/>
            <person name="Ouellette B.F.F."/>
            <person name="Keng T."/>
            <person name="Barton A.B."/>
            <person name="Su Y."/>
            <person name="Davies C.J."/>
            <person name="Storms R.K."/>
        </authorList>
    </citation>
    <scope>NUCLEOTIDE SEQUENCE [LARGE SCALE GENOMIC DNA]</scope>
    <source>
        <strain>ATCC 204508 / S288c</strain>
    </source>
</reference>
<reference key="2">
    <citation type="journal article" date="2014" name="G3 (Bethesda)">
        <title>The reference genome sequence of Saccharomyces cerevisiae: Then and now.</title>
        <authorList>
            <person name="Engel S.R."/>
            <person name="Dietrich F.S."/>
            <person name="Fisk D.G."/>
            <person name="Binkley G."/>
            <person name="Balakrishnan R."/>
            <person name="Costanzo M.C."/>
            <person name="Dwight S.S."/>
            <person name="Hitz B.C."/>
            <person name="Karra K."/>
            <person name="Nash R.S."/>
            <person name="Weng S."/>
            <person name="Wong E.D."/>
            <person name="Lloyd P."/>
            <person name="Skrzypek M.S."/>
            <person name="Miyasato S.R."/>
            <person name="Simison M."/>
            <person name="Cherry J.M."/>
        </authorList>
    </citation>
    <scope>GENOME REANNOTATION</scope>
    <source>
        <strain>ATCC 204508 / S288c</strain>
    </source>
</reference>
<reference key="3">
    <citation type="journal article" date="2003" name="Genome Res.">
        <title>Systematic discovery of new genes in the Saccharomyces cerevisiae genome.</title>
        <authorList>
            <person name="Kessler M.M."/>
            <person name="Zeng Q."/>
            <person name="Hogan S."/>
            <person name="Cook R."/>
            <person name="Morales A.J."/>
            <person name="Cottarel G."/>
        </authorList>
    </citation>
    <scope>GENOME REANNOTATION</scope>
</reference>